<protein>
    <recommendedName>
        <fullName>Cysteine proteinase inhibitor 1</fullName>
    </recommendedName>
    <alternativeName>
        <fullName>Oryzacystatin I</fullName>
        <shortName>OC-I</shortName>
    </alternativeName>
    <alternativeName>
        <fullName>Oryzacystatin-1</fullName>
    </alternativeName>
    <alternativeName>
        <fullName>OsCP1</fullName>
    </alternativeName>
    <alternativeName>
        <fullName>SPOC-I</fullName>
    </alternativeName>
</protein>
<sequence length="140" mass="15355">MRKYRVAGLVAALLVLHSLATPSAQAEAHRAGGEGEEKMSSDGGPVLGGVEPVGNENDLHLVDLARFAVTEHNKKANSLLEFEKLVSVKQQVVAGTLYYFTIEVKEGDAKKLYEAKVWEKPWMDFKELQEFKPVDASANA</sequence>
<proteinExistence type="evidence at protein level"/>
<dbReference type="EMBL" id="M29259">
    <property type="protein sequence ID" value="AAA33912.1"/>
    <property type="status" value="ALT_INIT"/>
    <property type="molecule type" value="Genomic_DNA"/>
</dbReference>
<dbReference type="EMBL" id="AP003221">
    <property type="protein sequence ID" value="BAB86438.1"/>
    <property type="status" value="ALT_INIT"/>
    <property type="molecule type" value="Genomic_DNA"/>
</dbReference>
<dbReference type="EMBL" id="AP003232">
    <property type="protein sequence ID" value="BAB92242.1"/>
    <property type="status" value="ALT_INIT"/>
    <property type="molecule type" value="Genomic_DNA"/>
</dbReference>
<dbReference type="EMBL" id="AP008207">
    <property type="protein sequence ID" value="BAF06464.1"/>
    <property type="molecule type" value="Genomic_DNA"/>
</dbReference>
<dbReference type="EMBL" id="AP014957">
    <property type="protein sequence ID" value="BAS74814.1"/>
    <property type="molecule type" value="Genomic_DNA"/>
</dbReference>
<dbReference type="EMBL" id="AK061770">
    <property type="status" value="NOT_ANNOTATED_CDS"/>
    <property type="molecule type" value="mRNA"/>
</dbReference>
<dbReference type="EMBL" id="AF164378">
    <property type="protein sequence ID" value="AAF18388.1"/>
    <property type="molecule type" value="Genomic_DNA"/>
</dbReference>
<dbReference type="EMBL" id="U54702">
    <property type="protein sequence ID" value="AAB66355.1"/>
    <property type="status" value="ALT_FRAME"/>
    <property type="molecule type" value="mRNA"/>
</dbReference>
<dbReference type="EMBL" id="AF435976">
    <property type="protein sequence ID" value="AAL30830.1"/>
    <property type="status" value="ALT_INIT"/>
    <property type="molecule type" value="mRNA"/>
</dbReference>
<dbReference type="EMBL" id="S49967">
    <property type="protein sequence ID" value="AAB24010.1"/>
    <property type="status" value="ALT_INIT"/>
    <property type="molecule type" value="mRNA"/>
</dbReference>
<dbReference type="EMBL" id="J03469">
    <property type="protein sequence ID" value="AAA33903.1"/>
    <property type="status" value="ALT_INIT"/>
    <property type="molecule type" value="mRNA"/>
</dbReference>
<dbReference type="PIR" id="B28464">
    <property type="entry name" value="A28464"/>
</dbReference>
<dbReference type="RefSeq" id="XP_015621143.1">
    <property type="nucleotide sequence ID" value="XM_015765657.1"/>
</dbReference>
<dbReference type="PDB" id="1EQK">
    <property type="method" value="NMR"/>
    <property type="chains" value="A=39-140"/>
</dbReference>
<dbReference type="PDBsum" id="1EQK"/>
<dbReference type="BMRB" id="P09229"/>
<dbReference type="SMR" id="P09229"/>
<dbReference type="FunCoup" id="P09229">
    <property type="interactions" value="117"/>
</dbReference>
<dbReference type="STRING" id="39947.P09229"/>
<dbReference type="MEROPS" id="I25.052"/>
<dbReference type="PaxDb" id="39947-P09229"/>
<dbReference type="EnsemblPlants" id="Os01t0803200-01">
    <molecule id="P09229-1"/>
    <property type="protein sequence ID" value="Os01t0803200-01"/>
    <property type="gene ID" value="Os01g0803200"/>
</dbReference>
<dbReference type="Gramene" id="Os01t0803200-01">
    <molecule id="P09229-1"/>
    <property type="protein sequence ID" value="Os01t0803200-01"/>
    <property type="gene ID" value="Os01g0803200"/>
</dbReference>
<dbReference type="KEGG" id="dosa:Os01g0803200"/>
<dbReference type="eggNOG" id="ENOG502SC50">
    <property type="taxonomic scope" value="Eukaryota"/>
</dbReference>
<dbReference type="InParanoid" id="P09229"/>
<dbReference type="OMA" id="WHRICFR"/>
<dbReference type="OrthoDB" id="1908104at2759"/>
<dbReference type="EvolutionaryTrace" id="P09229"/>
<dbReference type="Proteomes" id="UP000000763">
    <property type="component" value="Chromosome 1"/>
</dbReference>
<dbReference type="Proteomes" id="UP000059680">
    <property type="component" value="Chromosome 1"/>
</dbReference>
<dbReference type="ExpressionAtlas" id="P09229">
    <property type="expression patterns" value="baseline and differential"/>
</dbReference>
<dbReference type="GO" id="GO:0005576">
    <property type="term" value="C:extracellular region"/>
    <property type="evidence" value="ECO:0007669"/>
    <property type="project" value="UniProtKB-SubCell"/>
</dbReference>
<dbReference type="GO" id="GO:0004869">
    <property type="term" value="F:cysteine-type endopeptidase inhibitor activity"/>
    <property type="evidence" value="ECO:0000318"/>
    <property type="project" value="GO_Central"/>
</dbReference>
<dbReference type="GO" id="GO:0006952">
    <property type="term" value="P:defense response"/>
    <property type="evidence" value="ECO:0007669"/>
    <property type="project" value="UniProtKB-KW"/>
</dbReference>
<dbReference type="CDD" id="cd00042">
    <property type="entry name" value="CY"/>
    <property type="match status" value="1"/>
</dbReference>
<dbReference type="FunFam" id="3.10.450.10:FF:000025">
    <property type="entry name" value="Cysteine proteinase inhibitor"/>
    <property type="match status" value="1"/>
</dbReference>
<dbReference type="Gene3D" id="3.10.450.10">
    <property type="match status" value="1"/>
</dbReference>
<dbReference type="InterPro" id="IPR027214">
    <property type="entry name" value="Cystatin"/>
</dbReference>
<dbReference type="InterPro" id="IPR000010">
    <property type="entry name" value="Cystatin_dom"/>
</dbReference>
<dbReference type="InterPro" id="IPR046350">
    <property type="entry name" value="Cystatin_sf"/>
</dbReference>
<dbReference type="InterPro" id="IPR018073">
    <property type="entry name" value="Prot_inh_cystat_CS"/>
</dbReference>
<dbReference type="PANTHER" id="PTHR11413">
    <property type="entry name" value="CYSTATIN FAMILY MEMBER"/>
    <property type="match status" value="1"/>
</dbReference>
<dbReference type="PANTHER" id="PTHR11413:SF110">
    <property type="entry name" value="CYSTEINE PROTEINASE INHIBITOR 6"/>
    <property type="match status" value="1"/>
</dbReference>
<dbReference type="Pfam" id="PF16845">
    <property type="entry name" value="SQAPI"/>
    <property type="match status" value="1"/>
</dbReference>
<dbReference type="SMART" id="SM00043">
    <property type="entry name" value="CY"/>
    <property type="match status" value="1"/>
</dbReference>
<dbReference type="SUPFAM" id="SSF54403">
    <property type="entry name" value="Cystatin/monellin"/>
    <property type="match status" value="1"/>
</dbReference>
<dbReference type="PROSITE" id="PS00287">
    <property type="entry name" value="CYSTATIN"/>
    <property type="match status" value="1"/>
</dbReference>
<accession>P09229</accession>
<accession>Q0JIG4</accession>
<accession>Q547V7</accession>
<accession>Q7F5W6</accession>
<accession>Q9SBW0</accession>
<reference key="1">
    <citation type="journal article" date="1989" name="Gene">
        <title>Cloning and sequence analysis of the genomic DNA fragment encoding oryzacystatin.</title>
        <authorList>
            <person name="Kondo H."/>
            <person name="Emori Y."/>
            <person name="Abe K."/>
            <person name="Suzuki K."/>
            <person name="Arai S."/>
        </authorList>
    </citation>
    <scope>NUCLEOTIDE SEQUENCE [GENOMIC DNA]</scope>
</reference>
<reference key="2">
    <citation type="journal article" date="2002" name="Nature">
        <title>The genome sequence and structure of rice chromosome 1.</title>
        <authorList>
            <person name="Sasaki T."/>
            <person name="Matsumoto T."/>
            <person name="Yamamoto K."/>
            <person name="Sakata K."/>
            <person name="Baba T."/>
            <person name="Katayose Y."/>
            <person name="Wu J."/>
            <person name="Niimura Y."/>
            <person name="Cheng Z."/>
            <person name="Nagamura Y."/>
            <person name="Antonio B.A."/>
            <person name="Kanamori H."/>
            <person name="Hosokawa S."/>
            <person name="Masukawa M."/>
            <person name="Arikawa K."/>
            <person name="Chiden Y."/>
            <person name="Hayashi M."/>
            <person name="Okamoto M."/>
            <person name="Ando T."/>
            <person name="Aoki H."/>
            <person name="Arita K."/>
            <person name="Hamada M."/>
            <person name="Harada C."/>
            <person name="Hijishita S."/>
            <person name="Honda M."/>
            <person name="Ichikawa Y."/>
            <person name="Idonuma A."/>
            <person name="Iijima M."/>
            <person name="Ikeda M."/>
            <person name="Ikeno M."/>
            <person name="Ito S."/>
            <person name="Ito T."/>
            <person name="Ito Y."/>
            <person name="Ito Y."/>
            <person name="Iwabuchi A."/>
            <person name="Kamiya K."/>
            <person name="Karasawa W."/>
            <person name="Katagiri S."/>
            <person name="Kikuta A."/>
            <person name="Kobayashi N."/>
            <person name="Kono I."/>
            <person name="Machita K."/>
            <person name="Maehara T."/>
            <person name="Mizuno H."/>
            <person name="Mizubayashi T."/>
            <person name="Mukai Y."/>
            <person name="Nagasaki H."/>
            <person name="Nakashima M."/>
            <person name="Nakama Y."/>
            <person name="Nakamichi Y."/>
            <person name="Nakamura M."/>
            <person name="Namiki N."/>
            <person name="Negishi M."/>
            <person name="Ohta I."/>
            <person name="Ono N."/>
            <person name="Saji S."/>
            <person name="Sakai K."/>
            <person name="Shibata M."/>
            <person name="Shimokawa T."/>
            <person name="Shomura A."/>
            <person name="Song J."/>
            <person name="Takazaki Y."/>
            <person name="Terasawa K."/>
            <person name="Tsuji K."/>
            <person name="Waki K."/>
            <person name="Yamagata H."/>
            <person name="Yamane H."/>
            <person name="Yoshiki S."/>
            <person name="Yoshihara R."/>
            <person name="Yukawa K."/>
            <person name="Zhong H."/>
            <person name="Iwama H."/>
            <person name="Endo T."/>
            <person name="Ito H."/>
            <person name="Hahn J.H."/>
            <person name="Kim H.-I."/>
            <person name="Eun M.-Y."/>
            <person name="Yano M."/>
            <person name="Jiang J."/>
            <person name="Gojobori T."/>
        </authorList>
    </citation>
    <scope>NUCLEOTIDE SEQUENCE [LARGE SCALE GENOMIC DNA]</scope>
    <source>
        <strain>cv. Nipponbare</strain>
    </source>
</reference>
<reference key="3">
    <citation type="journal article" date="2005" name="Nature">
        <title>The map-based sequence of the rice genome.</title>
        <authorList>
            <consortium name="International rice genome sequencing project (IRGSP)"/>
        </authorList>
    </citation>
    <scope>NUCLEOTIDE SEQUENCE [LARGE SCALE GENOMIC DNA]</scope>
    <source>
        <strain>cv. Nipponbare</strain>
    </source>
</reference>
<reference key="4">
    <citation type="journal article" date="2008" name="Nucleic Acids Res.">
        <title>The rice annotation project database (RAP-DB): 2008 update.</title>
        <authorList>
            <consortium name="The rice annotation project (RAP)"/>
        </authorList>
    </citation>
    <scope>GENOME REANNOTATION</scope>
    <source>
        <strain>cv. Nipponbare</strain>
    </source>
</reference>
<reference key="5">
    <citation type="journal article" date="2013" name="Rice">
        <title>Improvement of the Oryza sativa Nipponbare reference genome using next generation sequence and optical map data.</title>
        <authorList>
            <person name="Kawahara Y."/>
            <person name="de la Bastide M."/>
            <person name="Hamilton J.P."/>
            <person name="Kanamori H."/>
            <person name="McCombie W.R."/>
            <person name="Ouyang S."/>
            <person name="Schwartz D.C."/>
            <person name="Tanaka T."/>
            <person name="Wu J."/>
            <person name="Zhou S."/>
            <person name="Childs K.L."/>
            <person name="Davidson R.M."/>
            <person name="Lin H."/>
            <person name="Quesada-Ocampo L."/>
            <person name="Vaillancourt B."/>
            <person name="Sakai H."/>
            <person name="Lee S.S."/>
            <person name="Kim J."/>
            <person name="Numa H."/>
            <person name="Itoh T."/>
            <person name="Buell C.R."/>
            <person name="Matsumoto T."/>
        </authorList>
    </citation>
    <scope>GENOME REANNOTATION</scope>
    <source>
        <strain>cv. Nipponbare</strain>
    </source>
</reference>
<reference key="6">
    <citation type="journal article" date="2003" name="Science">
        <title>Collection, mapping, and annotation of over 28,000 cDNA clones from japonica rice.</title>
        <authorList>
            <consortium name="The rice full-length cDNA consortium"/>
        </authorList>
    </citation>
    <scope>NUCLEOTIDE SEQUENCE [LARGE SCALE MRNA] (ISOFORM 1)</scope>
    <source>
        <strain>cv. Nipponbare</strain>
    </source>
</reference>
<reference key="7">
    <citation type="online journal article" date="1999" name="Plant Gene Register">
        <title>Oryzacystatin-I has a signal peptide.</title>
        <authorList>
            <person name="Womack J.S."/>
            <person name="Randall J."/>
            <person name="Kemp J.D."/>
        </authorList>
        <locator>PGR99-175</locator>
    </citation>
    <scope>NUCLEOTIDE SEQUENCE [GENOMIC DNA] OF 1-63</scope>
</reference>
<reference key="8">
    <citation type="journal article" date="2000" name="Planta">
        <title>Identification of a signal peptide for oryzacystatin-I.</title>
        <authorList>
            <person name="Womack J.S."/>
            <person name="Randall J."/>
            <person name="Kemp J.D."/>
        </authorList>
    </citation>
    <scope>NUCLEOTIDE SEQUENCE [GENOMIC DNA] OF 1-63</scope>
</reference>
<reference key="9">
    <citation type="journal article" date="1996" name="Chin. J. Biotechnol.">
        <title>High level expression of oryzacystatin in Escherichia coli.</title>
        <authorList>
            <person name="Zhou Z."/>
            <person name="Zhu Z."/>
            <person name="Chen R."/>
            <person name="Liu C."/>
            <person name="Li X."/>
        </authorList>
    </citation>
    <scope>NUCLEOTIDE SEQUENCE [MRNA] OF 11-140 (ISOFORM 1)</scope>
    <source>
        <tissue>Seed</tissue>
    </source>
</reference>
<reference key="10">
    <citation type="submission" date="2001-10" db="EMBL/GenBank/DDBJ databases">
        <title>OsCPI, a rice blast inducible cysteine proteinase inhibitor.</title>
        <authorList>
            <person name="Peng Y.L."/>
            <person name="Qin Q.M."/>
            <person name="Su S.C."/>
            <person name="Li H."/>
        </authorList>
    </citation>
    <scope>NUCLEOTIDE SEQUENCE [MRNA] OF 12-140 (ISOFORM 1)</scope>
    <source>
        <strain>cv. Aichi asahi</strain>
    </source>
</reference>
<reference key="11">
    <citation type="journal article" date="1992" name="Protein Expr. Purif.">
        <title>Rice cystatin: bacterial expression, purification, cysteine proteinase inhibitory activity, and insect growth suppressing activity of a truncated form of the protein.</title>
        <authorList>
            <person name="Chen M.S."/>
            <person name="Johnson B."/>
            <person name="Wen L."/>
            <person name="Muthukrishnan S."/>
            <person name="Kramer K.J."/>
            <person name="Morgan T.D."/>
            <person name="Reeck G.R."/>
        </authorList>
    </citation>
    <scope>NUCLEOTIDE SEQUENCE [MRNA] OF 17-140 (ISOFORM 1)</scope>
</reference>
<reference key="12">
    <citation type="journal article" date="1987" name="J. Biol. Chem.">
        <title>Molecular cloning of a cysteine proteinase inhibitor of rice (oryzacystatin). Homology with animal cystatins and transient expression in the ripening process of rice seeds.</title>
        <authorList>
            <person name="Abe K."/>
            <person name="Emori Y."/>
            <person name="Kondo H."/>
            <person name="Suzuki K."/>
            <person name="Arai S."/>
        </authorList>
    </citation>
    <scope>NUCLEOTIDE SEQUENCE [MRNA] OF 26-140 (ISOFORM 1)</scope>
    <scope>PARTIAL PROTEIN SEQUENCE</scope>
    <source>
        <strain>cv. Nipponbare</strain>
        <tissue>Seed</tissue>
    </source>
</reference>
<reference key="13">
    <citation type="journal article" date="1990" name="J. Biol. Chem.">
        <title>Two distinct cystatin species in rice seeds with different specificities against cysteine proteinases. Molecular cloning, expression, and biochemical studies on oryzacystatin-II.</title>
        <authorList>
            <person name="Kondo H."/>
            <person name="Abe K."/>
            <person name="Nishimura I."/>
            <person name="Watanabe H."/>
            <person name="Emori Y."/>
            <person name="Arai S."/>
        </authorList>
    </citation>
    <scope>FUNCTION</scope>
    <scope>DEVELOPMENTAL STAGE</scope>
</reference>
<reference key="14">
    <citation type="journal article" date="1995" name="Plant J.">
        <title>Engineered oryzacystatin-I expressed in transgenic hairy roots confers resistance to Globodera pallida.</title>
        <authorList>
            <person name="Urwin P.E."/>
            <person name="Atkinson H.J."/>
            <person name="Waller D.A."/>
            <person name="McPherson M.J."/>
        </authorList>
    </citation>
    <scope>MUTAGENESIS OF ASP-124</scope>
</reference>
<reference key="15">
    <citation type="journal article" date="2005" name="Mol. Genet. Genomics">
        <title>Comparative phylogenetic analysis of cystatin gene families from arabidopsis, rice and barley.</title>
        <authorList>
            <person name="Martinez M."/>
            <person name="Abraham Z."/>
            <person name="Carbonero P."/>
            <person name="Diaz I."/>
        </authorList>
    </citation>
    <scope>GENE FAMILY</scope>
</reference>
<reference key="16">
    <citation type="journal article" date="2000" name="Biochemistry">
        <title>Three-dimensional solution structure of oryzacystatin-I, a cysteine proteinase inhibitor of the rice, Oryza sativa L. japonica.</title>
        <authorList>
            <person name="Nagata K."/>
            <person name="Kudo N."/>
            <person name="Abe K."/>
            <person name="Arai S."/>
            <person name="Tanokura M."/>
        </authorList>
    </citation>
    <scope>STRUCTURE BY NMR OF 39-140</scope>
</reference>
<comment type="function">
    <text evidence="2">There are two distinct cystatins in rice seeds (Oryzacystatin-1 and -2) with different specificities against cysteine proteinases. May be involved in the control of germination by inhibition of endogenous cysteine proteinases. May play a role in defense by inhibiting exogenous proteases such as those present in digestive tracks of insects and nematodes.</text>
</comment>
<comment type="subcellular location">
    <subcellularLocation>
        <location evidence="4">Secreted</location>
    </subcellularLocation>
</comment>
<comment type="alternative products">
    <event type="alternative splicing"/>
    <isoform>
        <id>P09229-1</id>
        <name>1</name>
        <sequence type="displayed"/>
    </isoform>
    <isoform>
        <id>P09229-2</id>
        <name>2</name>
        <sequence type="described" ref="VSP_023023 VSP_023024"/>
    </isoform>
</comment>
<comment type="developmental stage">
    <text evidence="2">Expressed in rice seeds between 2 and 4 weeks after flowering.</text>
</comment>
<comment type="biotechnology">
    <text>Introduction by genetic manipulation and expression in potato or banana confers resistance to insects and nematodes.</text>
</comment>
<comment type="similarity">
    <text evidence="4">Belongs to the cystatin family. Phytocystatin subfamily.</text>
</comment>
<comment type="sequence caution" evidence="4">
    <conflict type="erroneous initiation">
        <sequence resource="EMBL-CDS" id="AAA33903"/>
    </conflict>
</comment>
<comment type="sequence caution" evidence="4">
    <conflict type="erroneous initiation">
        <sequence resource="EMBL-CDS" id="AAA33912"/>
    </conflict>
</comment>
<comment type="sequence caution" evidence="4">
    <conflict type="erroneous initiation">
        <sequence resource="EMBL-CDS" id="AAB24010"/>
    </conflict>
</comment>
<comment type="sequence caution" evidence="4">
    <conflict type="frameshift">
        <sequence resource="EMBL-CDS" id="AAB66355"/>
    </conflict>
</comment>
<comment type="sequence caution" evidence="4">
    <conflict type="erroneous initiation">
        <sequence resource="EMBL-CDS" id="AAL30830"/>
    </conflict>
</comment>
<comment type="sequence caution" evidence="4">
    <conflict type="erroneous initiation">
        <sequence resource="EMBL-CDS" id="BAB86438"/>
    </conflict>
</comment>
<comment type="sequence caution" evidence="4">
    <conflict type="erroneous initiation">
        <sequence resource="EMBL-CDS" id="BAB92242"/>
    </conflict>
</comment>
<gene>
    <name type="ordered locus">Os01g0803200</name>
    <name type="ordered locus">LOC_Os01g58890</name>
    <name type="ORF">P0003D09.48</name>
    <name type="ORF">P0034E02.11</name>
</gene>
<evidence type="ECO:0000255" key="1"/>
<evidence type="ECO:0000269" key="2">
    <source>
    </source>
</evidence>
<evidence type="ECO:0000269" key="3">
    <source>
    </source>
</evidence>
<evidence type="ECO:0000305" key="4"/>
<evidence type="ECO:0007829" key="5">
    <source>
        <dbReference type="PDB" id="1EQK"/>
    </source>
</evidence>
<name>CYT1_ORYSJ</name>
<feature type="signal peptide" evidence="1">
    <location>
        <begin position="1"/>
        <end position="26"/>
    </location>
</feature>
<feature type="chain" id="PRO_0000207156" description="Cysteine proteinase inhibitor 1">
    <location>
        <begin position="27"/>
        <end position="140"/>
    </location>
</feature>
<feature type="domain" description="Cystatin">
    <location>
        <begin position="48"/>
        <end position="135"/>
    </location>
</feature>
<feature type="short sequence motif" description="Secondary area of contact">
    <location>
        <begin position="91"/>
        <end position="95"/>
    </location>
</feature>
<feature type="site" description="Reactive site">
    <location>
        <position position="48"/>
    </location>
</feature>
<feature type="splice variant" id="VSP_023023" description="In isoform 2." evidence="4">
    <original>NSLLEFEKLVSVKQQVVAGT</original>
    <variation>VSAPLYPPPYFSSSQGRSSN</variation>
    <location>
        <begin position="77"/>
        <end position="96"/>
    </location>
</feature>
<feature type="splice variant" id="VSP_023024" description="In isoform 2." evidence="4">
    <location>
        <begin position="97"/>
        <end position="140"/>
    </location>
</feature>
<feature type="mutagenesis site" description="Increase in inhibition activity by 13-fold." evidence="3">
    <location>
        <position position="124"/>
    </location>
</feature>
<feature type="strand" evidence="5">
    <location>
        <begin position="47"/>
        <end position="53"/>
    </location>
</feature>
<feature type="helix" evidence="5">
    <location>
        <begin position="59"/>
        <end position="75"/>
    </location>
</feature>
<feature type="strand" evidence="5">
    <location>
        <begin position="80"/>
        <end position="106"/>
    </location>
</feature>
<feature type="strand" evidence="5">
    <location>
        <begin position="111"/>
        <end position="120"/>
    </location>
</feature>
<feature type="turn" evidence="5">
    <location>
        <begin position="121"/>
        <end position="124"/>
    </location>
</feature>
<feature type="strand" evidence="5">
    <location>
        <begin position="128"/>
        <end position="132"/>
    </location>
</feature>
<organism>
    <name type="scientific">Oryza sativa subsp. japonica</name>
    <name type="common">Rice</name>
    <dbReference type="NCBI Taxonomy" id="39947"/>
    <lineage>
        <taxon>Eukaryota</taxon>
        <taxon>Viridiplantae</taxon>
        <taxon>Streptophyta</taxon>
        <taxon>Embryophyta</taxon>
        <taxon>Tracheophyta</taxon>
        <taxon>Spermatophyta</taxon>
        <taxon>Magnoliopsida</taxon>
        <taxon>Liliopsida</taxon>
        <taxon>Poales</taxon>
        <taxon>Poaceae</taxon>
        <taxon>BOP clade</taxon>
        <taxon>Oryzoideae</taxon>
        <taxon>Oryzeae</taxon>
        <taxon>Oryzinae</taxon>
        <taxon>Oryza</taxon>
        <taxon>Oryza sativa</taxon>
    </lineage>
</organism>
<keyword id="KW-0002">3D-structure</keyword>
<keyword id="KW-0025">Alternative splicing</keyword>
<keyword id="KW-0903">Direct protein sequencing</keyword>
<keyword id="KW-0611">Plant defense</keyword>
<keyword id="KW-0646">Protease inhibitor</keyword>
<keyword id="KW-1185">Reference proteome</keyword>
<keyword id="KW-0964">Secreted</keyword>
<keyword id="KW-0732">Signal</keyword>
<keyword id="KW-0789">Thiol protease inhibitor</keyword>